<sequence length="721" mass="78781">MEGQNKSITFDGREIRLTTGLYAPQANGSVMIECGDTSLLVTATKTTKKEVSDFLPLICDYEEKLYAAGRIPGGFMRREGRPPERATLISRLIDRPMRPLFPSWMRDEIQIVASCLSLDERVPADILAVTGASIATLLGEIPFYGPMAAVRVGLIGDDFILNPSYREIEKGDLDIVVAGSKEGIVMIEAGANQLSEQDTIEAIDFGYEAVSELIKSQEDLLKDLGIKQVKPSEPEEDKTLPSFLEKNCTKPIELVLKKFDLSKEERDLELEKIKVETQGKIESLKDDNQLKVLLSENDKLLSSDFKKLTKKLMRSQIINDGKRVDGRDLDEVRKISASAGILPKRVHGSALFQRGLTQVLSTTTLGTPSDAQEMDDLNPSTEKTYLHHYNFPPYSVGETRPMRTPGRREIGHGALAERAIIPVLPGKETFPYVLRVVSEVLSSNGSTSMGSVCGSTLSLLDAGVPLKAPVSGTAMGLIKEGKEVRILTDIQGIEDFLGDMDFKVAGTDKGITALQMDMKITGLPVSIISDAIKKARPARLHILEKMQEAIEKPQETLSPHAPRLLSFRIDPELIGTVIGPGGRTIKGITERTNTKIDIEDGGIVTIASHDGAAAEEAQKIIEGLTRKVHEGEIFPGVVTRIIPIGAFVEILPGKEGMVHISQLSEARVERVEDVVRQGDEVTVRVREIDSRGRINLTLRGVGQNGGMSYPEPTPTPVAPLS</sequence>
<evidence type="ECO:0000255" key="1">
    <source>
        <dbReference type="HAMAP-Rule" id="MF_01595"/>
    </source>
</evidence>
<evidence type="ECO:0000256" key="2">
    <source>
        <dbReference type="SAM" id="MobiDB-lite"/>
    </source>
</evidence>
<organism>
    <name type="scientific">Prochlorococcus marinus (strain MIT 9301)</name>
    <dbReference type="NCBI Taxonomy" id="167546"/>
    <lineage>
        <taxon>Bacteria</taxon>
        <taxon>Bacillati</taxon>
        <taxon>Cyanobacteriota</taxon>
        <taxon>Cyanophyceae</taxon>
        <taxon>Synechococcales</taxon>
        <taxon>Prochlorococcaceae</taxon>
        <taxon>Prochlorococcus</taxon>
    </lineage>
</organism>
<keyword id="KW-0963">Cytoplasm</keyword>
<keyword id="KW-0460">Magnesium</keyword>
<keyword id="KW-0479">Metal-binding</keyword>
<keyword id="KW-0548">Nucleotidyltransferase</keyword>
<keyword id="KW-1185">Reference proteome</keyword>
<keyword id="KW-0694">RNA-binding</keyword>
<keyword id="KW-0808">Transferase</keyword>
<dbReference type="EC" id="2.7.7.8" evidence="1"/>
<dbReference type="EMBL" id="CP000576">
    <property type="protein sequence ID" value="ABO18015.1"/>
    <property type="molecule type" value="Genomic_DNA"/>
</dbReference>
<dbReference type="RefSeq" id="WP_011863324.1">
    <property type="nucleotide sequence ID" value="NC_009091.1"/>
</dbReference>
<dbReference type="SMR" id="A3PE40"/>
<dbReference type="STRING" id="167546.P9301_13921"/>
<dbReference type="KEGG" id="pmg:P9301_13921"/>
<dbReference type="eggNOG" id="COG1185">
    <property type="taxonomic scope" value="Bacteria"/>
</dbReference>
<dbReference type="HOGENOM" id="CLU_004217_2_2_3"/>
<dbReference type="OrthoDB" id="9804305at2"/>
<dbReference type="Proteomes" id="UP000001430">
    <property type="component" value="Chromosome"/>
</dbReference>
<dbReference type="GO" id="GO:0005829">
    <property type="term" value="C:cytosol"/>
    <property type="evidence" value="ECO:0007669"/>
    <property type="project" value="TreeGrafter"/>
</dbReference>
<dbReference type="GO" id="GO:0000175">
    <property type="term" value="F:3'-5'-RNA exonuclease activity"/>
    <property type="evidence" value="ECO:0007669"/>
    <property type="project" value="TreeGrafter"/>
</dbReference>
<dbReference type="GO" id="GO:0000287">
    <property type="term" value="F:magnesium ion binding"/>
    <property type="evidence" value="ECO:0007669"/>
    <property type="project" value="UniProtKB-UniRule"/>
</dbReference>
<dbReference type="GO" id="GO:0004654">
    <property type="term" value="F:polyribonucleotide nucleotidyltransferase activity"/>
    <property type="evidence" value="ECO:0007669"/>
    <property type="project" value="UniProtKB-UniRule"/>
</dbReference>
<dbReference type="GO" id="GO:0003723">
    <property type="term" value="F:RNA binding"/>
    <property type="evidence" value="ECO:0007669"/>
    <property type="project" value="UniProtKB-UniRule"/>
</dbReference>
<dbReference type="GO" id="GO:0006402">
    <property type="term" value="P:mRNA catabolic process"/>
    <property type="evidence" value="ECO:0007669"/>
    <property type="project" value="UniProtKB-UniRule"/>
</dbReference>
<dbReference type="GO" id="GO:0006396">
    <property type="term" value="P:RNA processing"/>
    <property type="evidence" value="ECO:0007669"/>
    <property type="project" value="InterPro"/>
</dbReference>
<dbReference type="CDD" id="cd02393">
    <property type="entry name" value="KH-I_PNPase"/>
    <property type="match status" value="1"/>
</dbReference>
<dbReference type="CDD" id="cd11363">
    <property type="entry name" value="RNase_PH_PNPase_1"/>
    <property type="match status" value="1"/>
</dbReference>
<dbReference type="CDD" id="cd11364">
    <property type="entry name" value="RNase_PH_PNPase_2"/>
    <property type="match status" value="1"/>
</dbReference>
<dbReference type="CDD" id="cd04472">
    <property type="entry name" value="S1_PNPase"/>
    <property type="match status" value="1"/>
</dbReference>
<dbReference type="FunFam" id="3.30.1370.10:FF:000001">
    <property type="entry name" value="Polyribonucleotide nucleotidyltransferase"/>
    <property type="match status" value="1"/>
</dbReference>
<dbReference type="FunFam" id="3.30.230.70:FF:000001">
    <property type="entry name" value="Polyribonucleotide nucleotidyltransferase"/>
    <property type="match status" value="1"/>
</dbReference>
<dbReference type="FunFam" id="3.30.230.70:FF:000002">
    <property type="entry name" value="Polyribonucleotide nucleotidyltransferase"/>
    <property type="match status" value="1"/>
</dbReference>
<dbReference type="Gene3D" id="3.30.230.70">
    <property type="entry name" value="GHMP Kinase, N-terminal domain"/>
    <property type="match status" value="2"/>
</dbReference>
<dbReference type="Gene3D" id="3.30.1370.10">
    <property type="entry name" value="K Homology domain, type 1"/>
    <property type="match status" value="1"/>
</dbReference>
<dbReference type="Gene3D" id="2.40.50.140">
    <property type="entry name" value="Nucleic acid-binding proteins"/>
    <property type="match status" value="1"/>
</dbReference>
<dbReference type="HAMAP" id="MF_01595">
    <property type="entry name" value="PNPase"/>
    <property type="match status" value="1"/>
</dbReference>
<dbReference type="InterPro" id="IPR001247">
    <property type="entry name" value="ExoRNase_PH_dom1"/>
</dbReference>
<dbReference type="InterPro" id="IPR015847">
    <property type="entry name" value="ExoRNase_PH_dom2"/>
</dbReference>
<dbReference type="InterPro" id="IPR036345">
    <property type="entry name" value="ExoRNase_PH_dom2_sf"/>
</dbReference>
<dbReference type="InterPro" id="IPR004087">
    <property type="entry name" value="KH_dom"/>
</dbReference>
<dbReference type="InterPro" id="IPR004088">
    <property type="entry name" value="KH_dom_type_1"/>
</dbReference>
<dbReference type="InterPro" id="IPR036612">
    <property type="entry name" value="KH_dom_type_1_sf"/>
</dbReference>
<dbReference type="InterPro" id="IPR012340">
    <property type="entry name" value="NA-bd_OB-fold"/>
</dbReference>
<dbReference type="InterPro" id="IPR012162">
    <property type="entry name" value="PNPase"/>
</dbReference>
<dbReference type="InterPro" id="IPR027408">
    <property type="entry name" value="PNPase/RNase_PH_dom_sf"/>
</dbReference>
<dbReference type="InterPro" id="IPR015848">
    <property type="entry name" value="PNPase_PH_RNA-bd_bac/org-type"/>
</dbReference>
<dbReference type="InterPro" id="IPR020568">
    <property type="entry name" value="Ribosomal_Su5_D2-typ_SF"/>
</dbReference>
<dbReference type="InterPro" id="IPR003029">
    <property type="entry name" value="S1_domain"/>
</dbReference>
<dbReference type="NCBIfam" id="TIGR03591">
    <property type="entry name" value="polynuc_phos"/>
    <property type="match status" value="1"/>
</dbReference>
<dbReference type="NCBIfam" id="NF008805">
    <property type="entry name" value="PRK11824.1"/>
    <property type="match status" value="1"/>
</dbReference>
<dbReference type="PANTHER" id="PTHR11252">
    <property type="entry name" value="POLYRIBONUCLEOTIDE NUCLEOTIDYLTRANSFERASE"/>
    <property type="match status" value="1"/>
</dbReference>
<dbReference type="PANTHER" id="PTHR11252:SF0">
    <property type="entry name" value="POLYRIBONUCLEOTIDE NUCLEOTIDYLTRANSFERASE 1, MITOCHONDRIAL"/>
    <property type="match status" value="1"/>
</dbReference>
<dbReference type="Pfam" id="PF00013">
    <property type="entry name" value="KH_1"/>
    <property type="match status" value="1"/>
</dbReference>
<dbReference type="Pfam" id="PF03726">
    <property type="entry name" value="PNPase"/>
    <property type="match status" value="1"/>
</dbReference>
<dbReference type="Pfam" id="PF01138">
    <property type="entry name" value="RNase_PH"/>
    <property type="match status" value="2"/>
</dbReference>
<dbReference type="Pfam" id="PF03725">
    <property type="entry name" value="RNase_PH_C"/>
    <property type="match status" value="1"/>
</dbReference>
<dbReference type="Pfam" id="PF00575">
    <property type="entry name" value="S1"/>
    <property type="match status" value="1"/>
</dbReference>
<dbReference type="PIRSF" id="PIRSF005499">
    <property type="entry name" value="PNPase"/>
    <property type="match status" value="1"/>
</dbReference>
<dbReference type="SMART" id="SM00322">
    <property type="entry name" value="KH"/>
    <property type="match status" value="1"/>
</dbReference>
<dbReference type="SMART" id="SM00316">
    <property type="entry name" value="S1"/>
    <property type="match status" value="1"/>
</dbReference>
<dbReference type="SUPFAM" id="SSF54791">
    <property type="entry name" value="Eukaryotic type KH-domain (KH-domain type I)"/>
    <property type="match status" value="1"/>
</dbReference>
<dbReference type="SUPFAM" id="SSF50249">
    <property type="entry name" value="Nucleic acid-binding proteins"/>
    <property type="match status" value="1"/>
</dbReference>
<dbReference type="SUPFAM" id="SSF55666">
    <property type="entry name" value="Ribonuclease PH domain 2-like"/>
    <property type="match status" value="2"/>
</dbReference>
<dbReference type="SUPFAM" id="SSF54211">
    <property type="entry name" value="Ribosomal protein S5 domain 2-like"/>
    <property type="match status" value="2"/>
</dbReference>
<dbReference type="PROSITE" id="PS50084">
    <property type="entry name" value="KH_TYPE_1"/>
    <property type="match status" value="1"/>
</dbReference>
<dbReference type="PROSITE" id="PS50126">
    <property type="entry name" value="S1"/>
    <property type="match status" value="1"/>
</dbReference>
<feature type="chain" id="PRO_0000329766" description="Polyribonucleotide nucleotidyltransferase">
    <location>
        <begin position="1"/>
        <end position="721"/>
    </location>
</feature>
<feature type="domain" description="KH" evidence="1">
    <location>
        <begin position="562"/>
        <end position="621"/>
    </location>
</feature>
<feature type="domain" description="S1 motif" evidence="1">
    <location>
        <begin position="631"/>
        <end position="699"/>
    </location>
</feature>
<feature type="region of interest" description="Disordered" evidence="2">
    <location>
        <begin position="702"/>
        <end position="721"/>
    </location>
</feature>
<feature type="compositionally biased region" description="Pro residues" evidence="2">
    <location>
        <begin position="711"/>
        <end position="721"/>
    </location>
</feature>
<feature type="binding site" evidence="1">
    <location>
        <position position="495"/>
    </location>
    <ligand>
        <name>Mg(2+)</name>
        <dbReference type="ChEBI" id="CHEBI:18420"/>
    </ligand>
</feature>
<feature type="binding site" evidence="1">
    <location>
        <position position="501"/>
    </location>
    <ligand>
        <name>Mg(2+)</name>
        <dbReference type="ChEBI" id="CHEBI:18420"/>
    </ligand>
</feature>
<accession>A3PE40</accession>
<proteinExistence type="inferred from homology"/>
<gene>
    <name evidence="1" type="primary">pnp</name>
    <name type="ordered locus">P9301_13921</name>
</gene>
<reference key="1">
    <citation type="journal article" date="2007" name="PLoS Genet.">
        <title>Patterns and implications of gene gain and loss in the evolution of Prochlorococcus.</title>
        <authorList>
            <person name="Kettler G.C."/>
            <person name="Martiny A.C."/>
            <person name="Huang K."/>
            <person name="Zucker J."/>
            <person name="Coleman M.L."/>
            <person name="Rodrigue S."/>
            <person name="Chen F."/>
            <person name="Lapidus A."/>
            <person name="Ferriera S."/>
            <person name="Johnson J."/>
            <person name="Steglich C."/>
            <person name="Church G.M."/>
            <person name="Richardson P."/>
            <person name="Chisholm S.W."/>
        </authorList>
    </citation>
    <scope>NUCLEOTIDE SEQUENCE [LARGE SCALE GENOMIC DNA]</scope>
    <source>
        <strain>MIT 9301</strain>
    </source>
</reference>
<comment type="function">
    <text evidence="1">Involved in mRNA degradation. Catalyzes the phosphorolysis of single-stranded polyribonucleotides processively in the 3'- to 5'-direction.</text>
</comment>
<comment type="catalytic activity">
    <reaction evidence="1">
        <text>RNA(n+1) + phosphate = RNA(n) + a ribonucleoside 5'-diphosphate</text>
        <dbReference type="Rhea" id="RHEA:22096"/>
        <dbReference type="Rhea" id="RHEA-COMP:14527"/>
        <dbReference type="Rhea" id="RHEA-COMP:17342"/>
        <dbReference type="ChEBI" id="CHEBI:43474"/>
        <dbReference type="ChEBI" id="CHEBI:57930"/>
        <dbReference type="ChEBI" id="CHEBI:140395"/>
        <dbReference type="EC" id="2.7.7.8"/>
    </reaction>
</comment>
<comment type="cofactor">
    <cofactor evidence="1">
        <name>Mg(2+)</name>
        <dbReference type="ChEBI" id="CHEBI:18420"/>
    </cofactor>
</comment>
<comment type="subcellular location">
    <subcellularLocation>
        <location evidence="1">Cytoplasm</location>
    </subcellularLocation>
</comment>
<comment type="similarity">
    <text evidence="1">Belongs to the polyribonucleotide nucleotidyltransferase family.</text>
</comment>
<name>PNP_PROM0</name>
<protein>
    <recommendedName>
        <fullName evidence="1">Polyribonucleotide nucleotidyltransferase</fullName>
        <ecNumber evidence="1">2.7.7.8</ecNumber>
    </recommendedName>
    <alternativeName>
        <fullName evidence="1">Polynucleotide phosphorylase</fullName>
        <shortName evidence="1">PNPase</shortName>
    </alternativeName>
</protein>